<evidence type="ECO:0000255" key="1">
    <source>
        <dbReference type="HAMAP-Rule" id="MF_01398"/>
    </source>
</evidence>
<accession>B6IX47</accession>
<organism>
    <name type="scientific">Rhodospirillum centenum (strain ATCC 51521 / SW)</name>
    <dbReference type="NCBI Taxonomy" id="414684"/>
    <lineage>
        <taxon>Bacteria</taxon>
        <taxon>Pseudomonadati</taxon>
        <taxon>Pseudomonadota</taxon>
        <taxon>Alphaproteobacteria</taxon>
        <taxon>Rhodospirillales</taxon>
        <taxon>Rhodospirillaceae</taxon>
        <taxon>Rhodospirillum</taxon>
    </lineage>
</organism>
<dbReference type="EMBL" id="CP000613">
    <property type="protein sequence ID" value="ACJ00871.1"/>
    <property type="molecule type" value="Genomic_DNA"/>
</dbReference>
<dbReference type="RefSeq" id="WP_012568649.1">
    <property type="nucleotide sequence ID" value="NC_011420.2"/>
</dbReference>
<dbReference type="SMR" id="B6IX47"/>
<dbReference type="STRING" id="414684.RC1_3513"/>
<dbReference type="KEGG" id="rce:RC1_3513"/>
<dbReference type="eggNOG" id="COG0711">
    <property type="taxonomic scope" value="Bacteria"/>
</dbReference>
<dbReference type="HOGENOM" id="CLU_079215_6_2_5"/>
<dbReference type="OrthoDB" id="8479836at2"/>
<dbReference type="Proteomes" id="UP000001591">
    <property type="component" value="Chromosome"/>
</dbReference>
<dbReference type="GO" id="GO:0005886">
    <property type="term" value="C:plasma membrane"/>
    <property type="evidence" value="ECO:0007669"/>
    <property type="project" value="UniProtKB-SubCell"/>
</dbReference>
<dbReference type="GO" id="GO:0045259">
    <property type="term" value="C:proton-transporting ATP synthase complex"/>
    <property type="evidence" value="ECO:0007669"/>
    <property type="project" value="UniProtKB-KW"/>
</dbReference>
<dbReference type="GO" id="GO:0046933">
    <property type="term" value="F:proton-transporting ATP synthase activity, rotational mechanism"/>
    <property type="evidence" value="ECO:0007669"/>
    <property type="project" value="UniProtKB-UniRule"/>
</dbReference>
<dbReference type="GO" id="GO:0046961">
    <property type="term" value="F:proton-transporting ATPase activity, rotational mechanism"/>
    <property type="evidence" value="ECO:0007669"/>
    <property type="project" value="TreeGrafter"/>
</dbReference>
<dbReference type="CDD" id="cd06503">
    <property type="entry name" value="ATP-synt_Fo_b"/>
    <property type="match status" value="1"/>
</dbReference>
<dbReference type="HAMAP" id="MF_01398">
    <property type="entry name" value="ATP_synth_b_bprime"/>
    <property type="match status" value="1"/>
</dbReference>
<dbReference type="InterPro" id="IPR002146">
    <property type="entry name" value="ATP_synth_b/b'su_bac/chlpt"/>
</dbReference>
<dbReference type="InterPro" id="IPR050059">
    <property type="entry name" value="ATP_synthase_B_chain"/>
</dbReference>
<dbReference type="PANTHER" id="PTHR33445:SF1">
    <property type="entry name" value="ATP SYNTHASE SUBUNIT B"/>
    <property type="match status" value="1"/>
</dbReference>
<dbReference type="PANTHER" id="PTHR33445">
    <property type="entry name" value="ATP SYNTHASE SUBUNIT B', CHLOROPLASTIC"/>
    <property type="match status" value="1"/>
</dbReference>
<dbReference type="Pfam" id="PF00430">
    <property type="entry name" value="ATP-synt_B"/>
    <property type="match status" value="1"/>
</dbReference>
<gene>
    <name evidence="1" type="primary">atpF3</name>
    <name type="ordered locus">RC1_3513</name>
</gene>
<protein>
    <recommendedName>
        <fullName evidence="1">ATP synthase subunit b 3</fullName>
    </recommendedName>
    <alternativeName>
        <fullName evidence="1">ATP synthase F(0) sector subunit b 3</fullName>
    </alternativeName>
    <alternativeName>
        <fullName evidence="1">ATPase subunit I 3</fullName>
    </alternativeName>
    <alternativeName>
        <fullName evidence="1">F-type ATPase subunit b 3</fullName>
        <shortName evidence="1">F-ATPase subunit b 3</shortName>
    </alternativeName>
</protein>
<sequence>MLQNPTFWVLVAFVLFVAAVWRIAANTIGKALDDRAERIREEIEQAQKLREDAQAALAQYQRKQRDALKEAENIIAAAREEADRIRRRAATDLEASLRRREAQAMEKIAQAEAQAVQQVRDLAVDIAVAATERILVQNMDATRDEVLVGNAIAELPAKLH</sequence>
<keyword id="KW-0066">ATP synthesis</keyword>
<keyword id="KW-0997">Cell inner membrane</keyword>
<keyword id="KW-1003">Cell membrane</keyword>
<keyword id="KW-0138">CF(0)</keyword>
<keyword id="KW-0375">Hydrogen ion transport</keyword>
<keyword id="KW-0406">Ion transport</keyword>
<keyword id="KW-0472">Membrane</keyword>
<keyword id="KW-1185">Reference proteome</keyword>
<keyword id="KW-0812">Transmembrane</keyword>
<keyword id="KW-1133">Transmembrane helix</keyword>
<keyword id="KW-0813">Transport</keyword>
<reference key="1">
    <citation type="submission" date="2007-03" db="EMBL/GenBank/DDBJ databases">
        <title>Genome sequence of Rhodospirillum centenum.</title>
        <authorList>
            <person name="Touchman J.W."/>
            <person name="Bauer C."/>
            <person name="Blankenship R.E."/>
        </authorList>
    </citation>
    <scope>NUCLEOTIDE SEQUENCE [LARGE SCALE GENOMIC DNA]</scope>
    <source>
        <strain>ATCC 51521 / SW</strain>
    </source>
</reference>
<proteinExistence type="inferred from homology"/>
<feature type="chain" id="PRO_0000368727" description="ATP synthase subunit b 3">
    <location>
        <begin position="1"/>
        <end position="160"/>
    </location>
</feature>
<feature type="transmembrane region" description="Helical" evidence="1">
    <location>
        <begin position="5"/>
        <end position="25"/>
    </location>
</feature>
<comment type="function">
    <text evidence="1">F(1)F(0) ATP synthase produces ATP from ADP in the presence of a proton or sodium gradient. F-type ATPases consist of two structural domains, F(1) containing the extramembraneous catalytic core and F(0) containing the membrane proton channel, linked together by a central stalk and a peripheral stalk. During catalysis, ATP synthesis in the catalytic domain of F(1) is coupled via a rotary mechanism of the central stalk subunits to proton translocation.</text>
</comment>
<comment type="function">
    <text evidence="1">Component of the F(0) channel, it forms part of the peripheral stalk, linking F(1) to F(0).</text>
</comment>
<comment type="subunit">
    <text evidence="1">F-type ATPases have 2 components, F(1) - the catalytic core - and F(0) - the membrane proton channel. F(1) has five subunits: alpha(3), beta(3), gamma(1), delta(1), epsilon(1). F(0) has three main subunits: a(1), b(2) and c(10-14). The alpha and beta chains form an alternating ring which encloses part of the gamma chain. F(1) is attached to F(0) by a central stalk formed by the gamma and epsilon chains, while a peripheral stalk is formed by the delta and b chains.</text>
</comment>
<comment type="subcellular location">
    <subcellularLocation>
        <location evidence="1">Cell inner membrane</location>
        <topology evidence="1">Single-pass membrane protein</topology>
    </subcellularLocation>
</comment>
<comment type="similarity">
    <text evidence="1">Belongs to the ATPase B chain family.</text>
</comment>
<name>ATPF3_RHOCS</name>